<accession>Q89868</accession>
<gene>
    <name type="primary">nef</name>
</gene>
<dbReference type="EMBL" id="U27200">
    <property type="protein sequence ID" value="AAC54474.1"/>
    <property type="molecule type" value="Genomic_DNA"/>
</dbReference>
<dbReference type="SMR" id="Q89868"/>
<dbReference type="Proteomes" id="UP000007423">
    <property type="component" value="Segment"/>
</dbReference>
<dbReference type="GO" id="GO:0020002">
    <property type="term" value="C:host cell plasma membrane"/>
    <property type="evidence" value="ECO:0007669"/>
    <property type="project" value="UniProtKB-SubCell"/>
</dbReference>
<dbReference type="GO" id="GO:0016020">
    <property type="term" value="C:membrane"/>
    <property type="evidence" value="ECO:0007669"/>
    <property type="project" value="UniProtKB-KW"/>
</dbReference>
<dbReference type="GO" id="GO:0005525">
    <property type="term" value="F:GTP binding"/>
    <property type="evidence" value="ECO:0007669"/>
    <property type="project" value="InterPro"/>
</dbReference>
<dbReference type="Gene3D" id="3.30.62.10">
    <property type="entry name" value="Nef Regulatory Factor"/>
    <property type="match status" value="1"/>
</dbReference>
<dbReference type="InterPro" id="IPR027481">
    <property type="entry name" value="HIV-1_Nef_core_sf"/>
</dbReference>
<dbReference type="InterPro" id="IPR001558">
    <property type="entry name" value="HIV_Nef"/>
</dbReference>
<dbReference type="Pfam" id="PF00469">
    <property type="entry name" value="F-protein"/>
    <property type="match status" value="1"/>
</dbReference>
<dbReference type="SUPFAM" id="SSF55671">
    <property type="entry name" value="Regulatory factor Nef"/>
    <property type="match status" value="1"/>
</dbReference>
<reference key="1">
    <citation type="journal article" date="1995" name="AIDS Res. Hum. Retroviruses">
        <title>Nucleotide sequence of the HIV-2 EHO genome, a divergent HIV-2 isolate.</title>
        <authorList>
            <person name="Galabru J."/>
            <person name="Rey-Cuille M.A."/>
            <person name="Hovanessian A.G."/>
        </authorList>
    </citation>
    <scope>NUCLEOTIDE SEQUENCE [GENOMIC DNA]</scope>
</reference>
<organismHost>
    <name type="scientific">Homo sapiens</name>
    <name type="common">Human</name>
    <dbReference type="NCBI Taxonomy" id="9606"/>
</organismHost>
<keyword id="KW-0014">AIDS</keyword>
<keyword id="KW-1032">Host cell membrane</keyword>
<keyword id="KW-1043">Host membrane</keyword>
<keyword id="KW-0945">Host-virus interaction</keyword>
<keyword id="KW-0449">Lipoprotein</keyword>
<keyword id="KW-0472">Membrane</keyword>
<keyword id="KW-0519">Myristate</keyword>
<keyword id="KW-0899">Viral immunoevasion</keyword>
<keyword id="KW-0843">Virulence</keyword>
<protein>
    <recommendedName>
        <fullName>Protein Nef</fullName>
    </recommendedName>
    <alternativeName>
        <fullName>3'ORF</fullName>
    </alternativeName>
    <alternativeName>
        <fullName>Negative factor</fullName>
        <shortName>F-protein</shortName>
    </alternativeName>
</protein>
<evidence type="ECO:0000250" key="1"/>
<evidence type="ECO:0000256" key="2">
    <source>
        <dbReference type="SAM" id="MobiDB-lite"/>
    </source>
</evidence>
<evidence type="ECO:0000305" key="3"/>
<sequence>MGSAGSKKQSKQQPGLRERLLRARRGPRGESSGERQERSLQYPGGSDKGLNSPSCDGQKTLGAEGGGKQDSDEDDEDNEVGVRVRPGVPLRPMTFKLAVDMSHFLKEKGELEGIFYSERRHKILDTYLENEEGIVSGWQNYTHGPGVRYPKFFGWLWKLVPINMIAEPEDEETHCLVHPAQTSAWDDPHEETLVWQFDSLLAYDYVAFSRFPEEFGYQSGMPEKEWKAKLRARGIPTE</sequence>
<proteinExistence type="inferred from homology"/>
<name>NEF_HV2EH</name>
<comment type="function">
    <text evidence="1">Factor of infectivity and pathogenicity, required for optimal virus replication. Alters numerous pathways of T-lymphocyte function and down-regulates immunity surface molecules in order to evade host defense and increase viral infectivity. Alters the functionality of other immunity cells, like dendritic cells, monocytes/macrophages and NK cells. One of the earliest and most abundantly expressed viral proteins (By similarity).</text>
</comment>
<comment type="function">
    <text evidence="1">In infected CD4(+) T-lymphocytes, down-regulates cell surface expression of CD4, CD28, CD3, and MHC-I or MHC-II molecules.</text>
</comment>
<comment type="function">
    <text>Interferes with TCR signaling from the cell membrane. Interacts with CD247/TCRZ (TCR zeta chain) and exert potent down-regulation of cell surface TCR/CD3 complexes.</text>
</comment>
<comment type="function">
    <text evidence="1">Plays a role in optimizing the host cell environment for viral replication without causing cell death by apoptosis. Protects the infected cells from apoptosis in order to keep them alive until the next virus generation is ready to strike (By similarity).</text>
</comment>
<comment type="function">
    <text evidence="1">Extracellular Nef protein targets CD4(+) T-lymphocytes for apoptosis by interacting with CXCR4 surface receptors.</text>
</comment>
<comment type="subunit">
    <text evidence="1">Homodimer. Interacts with host CD247/TCRZ; this interaction induces down-regulation of cell surface TCR/CD3 complexes.</text>
</comment>
<comment type="subcellular location">
    <subcellularLocation>
        <location evidence="1">Host cell membrane</location>
        <topology evidence="1">Lipid-anchor</topology>
        <orientation evidence="1">Cytoplasmic side</orientation>
    </subcellularLocation>
    <text evidence="1">Associates with the inner plasma membrane through its N-terminal domain.</text>
</comment>
<comment type="domain">
    <text evidence="1">The N-terminal domain is composed of the N-myristoyl glycine and of a cluster of positively charged amino acids. It is required for inner plasma membrane targeting of Nef and virion incorporation, and thereby for infectivity (By similarity).</text>
</comment>
<comment type="miscellaneous">
    <text>This isolate is from a Gambian case of 'neuro-AIDS'.</text>
</comment>
<comment type="similarity">
    <text evidence="3">Belongs to the lentivirus primate group Nef protein family.</text>
</comment>
<organism>
    <name type="scientific">Human immunodeficiency virus type 2 subtype B (isolate EHO)</name>
    <name type="common">HIV-2</name>
    <dbReference type="NCBI Taxonomy" id="388821"/>
    <lineage>
        <taxon>Viruses</taxon>
        <taxon>Riboviria</taxon>
        <taxon>Pararnavirae</taxon>
        <taxon>Artverviricota</taxon>
        <taxon>Revtraviricetes</taxon>
        <taxon>Ortervirales</taxon>
        <taxon>Retroviridae</taxon>
        <taxon>Orthoretrovirinae</taxon>
        <taxon>Lentivirus</taxon>
        <taxon>Human immunodeficiency virus 2</taxon>
    </lineage>
</organism>
<feature type="initiator methionine" description="Removed; by host" evidence="1">
    <location>
        <position position="1"/>
    </location>
</feature>
<feature type="chain" id="PRO_0000244817" description="Protein Nef">
    <location>
        <begin position="2"/>
        <end position="238"/>
    </location>
</feature>
<feature type="region of interest" description="Disordered" evidence="2">
    <location>
        <begin position="1"/>
        <end position="85"/>
    </location>
</feature>
<feature type="region of interest" description="Acidic">
    <location>
        <begin position="70"/>
        <end position="77"/>
    </location>
</feature>
<feature type="region of interest" description="Mediates dimerization" evidence="1">
    <location>
        <begin position="122"/>
        <end position="138"/>
    </location>
</feature>
<feature type="short sequence motif" description="PxxP">
    <location>
        <begin position="86"/>
        <end position="89"/>
    </location>
</feature>
<feature type="compositionally biased region" description="Basic and acidic residues" evidence="2">
    <location>
        <begin position="16"/>
        <end position="38"/>
    </location>
</feature>
<feature type="lipid moiety-binding region" description="N-myristoyl glycine; by host" evidence="1">
    <location>
        <position position="2"/>
    </location>
</feature>